<organism>
    <name type="scientific">Leptospira interrogans serogroup Icterohaemorrhagiae serovar Lai (strain 56601)</name>
    <dbReference type="NCBI Taxonomy" id="189518"/>
    <lineage>
        <taxon>Bacteria</taxon>
        <taxon>Pseudomonadati</taxon>
        <taxon>Spirochaetota</taxon>
        <taxon>Spirochaetia</taxon>
        <taxon>Leptospirales</taxon>
        <taxon>Leptospiraceae</taxon>
        <taxon>Leptospira</taxon>
    </lineage>
</organism>
<name>Y1736_LEPIN</name>
<feature type="chain" id="PRO_0000139447" description="UPF0235 protein LA_1736">
    <location>
        <begin position="1"/>
        <end position="73"/>
    </location>
</feature>
<proteinExistence type="inferred from homology"/>
<accession>Q8F5E6</accession>
<protein>
    <recommendedName>
        <fullName evidence="1">UPF0235 protein LA_1736</fullName>
    </recommendedName>
</protein>
<comment type="similarity">
    <text evidence="1">Belongs to the UPF0235 family.</text>
</comment>
<sequence length="73" mass="8318">MKFTVYVKPNSKKVFFRKEEDGVLTIAVREPALEGKANEAVIESISKEMKVPKSKIRILSGQKNKKKIIEIDL</sequence>
<dbReference type="EMBL" id="AE010300">
    <property type="protein sequence ID" value="AAN48935.1"/>
    <property type="molecule type" value="Genomic_DNA"/>
</dbReference>
<dbReference type="RefSeq" id="NP_711917.1">
    <property type="nucleotide sequence ID" value="NC_004342.2"/>
</dbReference>
<dbReference type="RefSeq" id="WP_000673486.1">
    <property type="nucleotide sequence ID" value="NC_004342.2"/>
</dbReference>
<dbReference type="SMR" id="Q8F5E6"/>
<dbReference type="STRING" id="189518.LA_1736"/>
<dbReference type="PaxDb" id="189518-LA_1736"/>
<dbReference type="EnsemblBacteria" id="AAN48935">
    <property type="protein sequence ID" value="AAN48935"/>
    <property type="gene ID" value="LA_1736"/>
</dbReference>
<dbReference type="KEGG" id="lil:LA_1736"/>
<dbReference type="PATRIC" id="fig|189518.3.peg.1726"/>
<dbReference type="HOGENOM" id="CLU_130694_5_3_12"/>
<dbReference type="InParanoid" id="Q8F5E6"/>
<dbReference type="OrthoDB" id="9800587at2"/>
<dbReference type="Proteomes" id="UP000001408">
    <property type="component" value="Chromosome I"/>
</dbReference>
<dbReference type="Gene3D" id="3.30.1200.10">
    <property type="entry name" value="YggU-like"/>
    <property type="match status" value="1"/>
</dbReference>
<dbReference type="HAMAP" id="MF_00634">
    <property type="entry name" value="UPF0235"/>
    <property type="match status" value="1"/>
</dbReference>
<dbReference type="InterPro" id="IPR003746">
    <property type="entry name" value="DUF167"/>
</dbReference>
<dbReference type="InterPro" id="IPR036591">
    <property type="entry name" value="YggU-like_sf"/>
</dbReference>
<dbReference type="NCBIfam" id="TIGR00251">
    <property type="entry name" value="DUF167 family protein"/>
    <property type="match status" value="1"/>
</dbReference>
<dbReference type="Pfam" id="PF02594">
    <property type="entry name" value="DUF167"/>
    <property type="match status" value="1"/>
</dbReference>
<dbReference type="SMART" id="SM01152">
    <property type="entry name" value="DUF167"/>
    <property type="match status" value="1"/>
</dbReference>
<dbReference type="SUPFAM" id="SSF69786">
    <property type="entry name" value="YggU-like"/>
    <property type="match status" value="1"/>
</dbReference>
<gene>
    <name type="ordered locus">LA_1736</name>
</gene>
<reference key="1">
    <citation type="journal article" date="2003" name="Nature">
        <title>Unique physiological and pathogenic features of Leptospira interrogans revealed by whole-genome sequencing.</title>
        <authorList>
            <person name="Ren S.-X."/>
            <person name="Fu G."/>
            <person name="Jiang X.-G."/>
            <person name="Zeng R."/>
            <person name="Miao Y.-G."/>
            <person name="Xu H."/>
            <person name="Zhang Y.-X."/>
            <person name="Xiong H."/>
            <person name="Lu G."/>
            <person name="Lu L.-F."/>
            <person name="Jiang H.-Q."/>
            <person name="Jia J."/>
            <person name="Tu Y.-F."/>
            <person name="Jiang J.-X."/>
            <person name="Gu W.-Y."/>
            <person name="Zhang Y.-Q."/>
            <person name="Cai Z."/>
            <person name="Sheng H.-H."/>
            <person name="Yin H.-F."/>
            <person name="Zhang Y."/>
            <person name="Zhu G.-F."/>
            <person name="Wan M."/>
            <person name="Huang H.-L."/>
            <person name="Qian Z."/>
            <person name="Wang S.-Y."/>
            <person name="Ma W."/>
            <person name="Yao Z.-J."/>
            <person name="Shen Y."/>
            <person name="Qiang B.-Q."/>
            <person name="Xia Q.-C."/>
            <person name="Guo X.-K."/>
            <person name="Danchin A."/>
            <person name="Saint Girons I."/>
            <person name="Somerville R.L."/>
            <person name="Wen Y.-M."/>
            <person name="Shi M.-H."/>
            <person name="Chen Z."/>
            <person name="Xu J.-G."/>
            <person name="Zhao G.-P."/>
        </authorList>
    </citation>
    <scope>NUCLEOTIDE SEQUENCE [LARGE SCALE GENOMIC DNA]</scope>
    <source>
        <strain>56601</strain>
    </source>
</reference>
<evidence type="ECO:0000255" key="1">
    <source>
        <dbReference type="HAMAP-Rule" id="MF_00634"/>
    </source>
</evidence>
<keyword id="KW-1185">Reference proteome</keyword>